<sequence length="166" mass="18185">MLPFFSNTTSKSVSVSSFQGSPATPLSFLFFFFLCRAGSSMTGCFTFFLDFIFFFAGVLGPSPMGMYSGASTLTGFFLLRFLGQLSMDLEGLEWLGRASPSWWIFFSSSPSHRVPWGSCASASAPRLPVPHPPSPLSKCPQHPRPRRTKGPGLRKLWGPGPPFFPS</sequence>
<dbReference type="EMBL" id="AK057456">
    <property type="protein sequence ID" value="BAB71495.1"/>
    <property type="molecule type" value="mRNA"/>
</dbReference>
<dbReference type="EMBL" id="CH471094">
    <property type="protein sequence ID" value="EAW96495.1"/>
    <property type="molecule type" value="Genomic_DNA"/>
</dbReference>
<dbReference type="EMBL" id="BC104436">
    <property type="status" value="NOT_ANNOTATED_CDS"/>
    <property type="molecule type" value="mRNA"/>
</dbReference>
<dbReference type="GlyCosmos" id="Q96M19">
    <property type="glycosylation" value="1 site, No reported glycans"/>
</dbReference>
<dbReference type="GlyGen" id="Q96M19">
    <property type="glycosylation" value="1 site"/>
</dbReference>
<dbReference type="BioMuta" id="HGNC:26557"/>
<dbReference type="PeptideAtlas" id="Q96M19"/>
<dbReference type="AGR" id="HGNC:26557"/>
<dbReference type="GeneCards" id="LINC00477"/>
<dbReference type="HGNC" id="HGNC:26557">
    <property type="gene designation" value="LINC00477"/>
</dbReference>
<dbReference type="neXtProt" id="NX_Q96M19"/>
<dbReference type="InParanoid" id="Q96M19"/>
<dbReference type="PAN-GO" id="Q96M19">
    <property type="GO annotations" value="0 GO annotations based on evolutionary models"/>
</dbReference>
<dbReference type="Pharos" id="Q96M19">
    <property type="development level" value="Tdark"/>
</dbReference>
<dbReference type="PRO" id="PR:Q96M19"/>
<dbReference type="Proteomes" id="UP000005640">
    <property type="component" value="Unplaced"/>
</dbReference>
<dbReference type="RNAct" id="Q96M19">
    <property type="molecule type" value="protein"/>
</dbReference>
<dbReference type="GO" id="GO:0016020">
    <property type="term" value="C:membrane"/>
    <property type="evidence" value="ECO:0007669"/>
    <property type="project" value="UniProtKB-SubCell"/>
</dbReference>
<accession>Q96M19</accession>
<keyword id="KW-0325">Glycoprotein</keyword>
<keyword id="KW-0472">Membrane</keyword>
<keyword id="KW-1185">Reference proteome</keyword>
<keyword id="KW-0812">Transmembrane</keyword>
<keyword id="KW-1133">Transmembrane helix</keyword>
<protein>
    <recommendedName>
        <fullName>Putative transmembrane protein encoded by LINC00477</fullName>
    </recommendedName>
</protein>
<evidence type="ECO:0000255" key="1"/>
<evidence type="ECO:0000256" key="2">
    <source>
        <dbReference type="SAM" id="MobiDB-lite"/>
    </source>
</evidence>
<evidence type="ECO:0000305" key="3"/>
<feature type="chain" id="PRO_0000344363" description="Putative transmembrane protein encoded by LINC00477">
    <location>
        <begin position="1"/>
        <end position="166"/>
    </location>
</feature>
<feature type="transmembrane region" description="Helical" evidence="1">
    <location>
        <begin position="15"/>
        <end position="35"/>
    </location>
</feature>
<feature type="transmembrane region" description="Helical" evidence="1">
    <location>
        <begin position="41"/>
        <end position="61"/>
    </location>
</feature>
<feature type="transmembrane region" description="Helical" evidence="1">
    <location>
        <begin position="63"/>
        <end position="83"/>
    </location>
</feature>
<feature type="region of interest" description="Disordered" evidence="2">
    <location>
        <begin position="127"/>
        <end position="166"/>
    </location>
</feature>
<feature type="glycosylation site" description="N-linked (GlcNAc...) asparagine" evidence="1">
    <location>
        <position position="7"/>
    </location>
</feature>
<gene>
    <name type="primary">LINC00477</name>
    <name type="synonym">C12orf67</name>
</gene>
<organism>
    <name type="scientific">Homo sapiens</name>
    <name type="common">Human</name>
    <dbReference type="NCBI Taxonomy" id="9606"/>
    <lineage>
        <taxon>Eukaryota</taxon>
        <taxon>Metazoa</taxon>
        <taxon>Chordata</taxon>
        <taxon>Craniata</taxon>
        <taxon>Vertebrata</taxon>
        <taxon>Euteleostomi</taxon>
        <taxon>Mammalia</taxon>
        <taxon>Eutheria</taxon>
        <taxon>Euarchontoglires</taxon>
        <taxon>Primates</taxon>
        <taxon>Haplorrhini</taxon>
        <taxon>Catarrhini</taxon>
        <taxon>Hominidae</taxon>
        <taxon>Homo</taxon>
    </lineage>
</organism>
<comment type="subcellular location">
    <subcellularLocation>
        <location evidence="3">Membrane</location>
        <topology evidence="3">Multi-pass membrane protein</topology>
    </subcellularLocation>
</comment>
<comment type="caution">
    <text evidence="3">Product of a dubious CDS prediction. May be a non-coding RNA.</text>
</comment>
<proteinExistence type="uncertain"/>
<reference key="1">
    <citation type="journal article" date="2004" name="Nat. Genet.">
        <title>Complete sequencing and characterization of 21,243 full-length human cDNAs.</title>
        <authorList>
            <person name="Ota T."/>
            <person name="Suzuki Y."/>
            <person name="Nishikawa T."/>
            <person name="Otsuki T."/>
            <person name="Sugiyama T."/>
            <person name="Irie R."/>
            <person name="Wakamatsu A."/>
            <person name="Hayashi K."/>
            <person name="Sato H."/>
            <person name="Nagai K."/>
            <person name="Kimura K."/>
            <person name="Makita H."/>
            <person name="Sekine M."/>
            <person name="Obayashi M."/>
            <person name="Nishi T."/>
            <person name="Shibahara T."/>
            <person name="Tanaka T."/>
            <person name="Ishii S."/>
            <person name="Yamamoto J."/>
            <person name="Saito K."/>
            <person name="Kawai Y."/>
            <person name="Isono Y."/>
            <person name="Nakamura Y."/>
            <person name="Nagahari K."/>
            <person name="Murakami K."/>
            <person name="Yasuda T."/>
            <person name="Iwayanagi T."/>
            <person name="Wagatsuma M."/>
            <person name="Shiratori A."/>
            <person name="Sudo H."/>
            <person name="Hosoiri T."/>
            <person name="Kaku Y."/>
            <person name="Kodaira H."/>
            <person name="Kondo H."/>
            <person name="Sugawara M."/>
            <person name="Takahashi M."/>
            <person name="Kanda K."/>
            <person name="Yokoi T."/>
            <person name="Furuya T."/>
            <person name="Kikkawa E."/>
            <person name="Omura Y."/>
            <person name="Abe K."/>
            <person name="Kamihara K."/>
            <person name="Katsuta N."/>
            <person name="Sato K."/>
            <person name="Tanikawa M."/>
            <person name="Yamazaki M."/>
            <person name="Ninomiya K."/>
            <person name="Ishibashi T."/>
            <person name="Yamashita H."/>
            <person name="Murakawa K."/>
            <person name="Fujimori K."/>
            <person name="Tanai H."/>
            <person name="Kimata M."/>
            <person name="Watanabe M."/>
            <person name="Hiraoka S."/>
            <person name="Chiba Y."/>
            <person name="Ishida S."/>
            <person name="Ono Y."/>
            <person name="Takiguchi S."/>
            <person name="Watanabe S."/>
            <person name="Yosida M."/>
            <person name="Hotuta T."/>
            <person name="Kusano J."/>
            <person name="Kanehori K."/>
            <person name="Takahashi-Fujii A."/>
            <person name="Hara H."/>
            <person name="Tanase T.-O."/>
            <person name="Nomura Y."/>
            <person name="Togiya S."/>
            <person name="Komai F."/>
            <person name="Hara R."/>
            <person name="Takeuchi K."/>
            <person name="Arita M."/>
            <person name="Imose N."/>
            <person name="Musashino K."/>
            <person name="Yuuki H."/>
            <person name="Oshima A."/>
            <person name="Sasaki N."/>
            <person name="Aotsuka S."/>
            <person name="Yoshikawa Y."/>
            <person name="Matsunawa H."/>
            <person name="Ichihara T."/>
            <person name="Shiohata N."/>
            <person name="Sano S."/>
            <person name="Moriya S."/>
            <person name="Momiyama H."/>
            <person name="Satoh N."/>
            <person name="Takami S."/>
            <person name="Terashima Y."/>
            <person name="Suzuki O."/>
            <person name="Nakagawa S."/>
            <person name="Senoh A."/>
            <person name="Mizoguchi H."/>
            <person name="Goto Y."/>
            <person name="Shimizu F."/>
            <person name="Wakebe H."/>
            <person name="Hishigaki H."/>
            <person name="Watanabe T."/>
            <person name="Sugiyama A."/>
            <person name="Takemoto M."/>
            <person name="Kawakami B."/>
            <person name="Yamazaki M."/>
            <person name="Watanabe K."/>
            <person name="Kumagai A."/>
            <person name="Itakura S."/>
            <person name="Fukuzumi Y."/>
            <person name="Fujimori Y."/>
            <person name="Komiyama M."/>
            <person name="Tashiro H."/>
            <person name="Tanigami A."/>
            <person name="Fujiwara T."/>
            <person name="Ono T."/>
            <person name="Yamada K."/>
            <person name="Fujii Y."/>
            <person name="Ozaki K."/>
            <person name="Hirao M."/>
            <person name="Ohmori Y."/>
            <person name="Kawabata A."/>
            <person name="Hikiji T."/>
            <person name="Kobatake N."/>
            <person name="Inagaki H."/>
            <person name="Ikema Y."/>
            <person name="Okamoto S."/>
            <person name="Okitani R."/>
            <person name="Kawakami T."/>
            <person name="Noguchi S."/>
            <person name="Itoh T."/>
            <person name="Shigeta K."/>
            <person name="Senba T."/>
            <person name="Matsumura K."/>
            <person name="Nakajima Y."/>
            <person name="Mizuno T."/>
            <person name="Morinaga M."/>
            <person name="Sasaki M."/>
            <person name="Togashi T."/>
            <person name="Oyama M."/>
            <person name="Hata H."/>
            <person name="Watanabe M."/>
            <person name="Komatsu T."/>
            <person name="Mizushima-Sugano J."/>
            <person name="Satoh T."/>
            <person name="Shirai Y."/>
            <person name="Takahashi Y."/>
            <person name="Nakagawa K."/>
            <person name="Okumura K."/>
            <person name="Nagase T."/>
            <person name="Nomura N."/>
            <person name="Kikuchi H."/>
            <person name="Masuho Y."/>
            <person name="Yamashita R."/>
            <person name="Nakai K."/>
            <person name="Yada T."/>
            <person name="Nakamura Y."/>
            <person name="Ohara O."/>
            <person name="Isogai T."/>
            <person name="Sugano S."/>
        </authorList>
    </citation>
    <scope>NUCLEOTIDE SEQUENCE [LARGE SCALE MRNA]</scope>
    <source>
        <tissue>Testis</tissue>
    </source>
</reference>
<reference key="2">
    <citation type="submission" date="2005-07" db="EMBL/GenBank/DDBJ databases">
        <authorList>
            <person name="Mural R.J."/>
            <person name="Istrail S."/>
            <person name="Sutton G.G."/>
            <person name="Florea L."/>
            <person name="Halpern A.L."/>
            <person name="Mobarry C.M."/>
            <person name="Lippert R."/>
            <person name="Walenz B."/>
            <person name="Shatkay H."/>
            <person name="Dew I."/>
            <person name="Miller J.R."/>
            <person name="Flanigan M.J."/>
            <person name="Edwards N.J."/>
            <person name="Bolanos R."/>
            <person name="Fasulo D."/>
            <person name="Halldorsson B.V."/>
            <person name="Hannenhalli S."/>
            <person name="Turner R."/>
            <person name="Yooseph S."/>
            <person name="Lu F."/>
            <person name="Nusskern D.R."/>
            <person name="Shue B.C."/>
            <person name="Zheng X.H."/>
            <person name="Zhong F."/>
            <person name="Delcher A.L."/>
            <person name="Huson D.H."/>
            <person name="Kravitz S.A."/>
            <person name="Mouchard L."/>
            <person name="Reinert K."/>
            <person name="Remington K.A."/>
            <person name="Clark A.G."/>
            <person name="Waterman M.S."/>
            <person name="Eichler E.E."/>
            <person name="Adams M.D."/>
            <person name="Hunkapiller M.W."/>
            <person name="Myers E.W."/>
            <person name="Venter J.C."/>
        </authorList>
    </citation>
    <scope>NUCLEOTIDE SEQUENCE [LARGE SCALE GENOMIC DNA]</scope>
</reference>
<reference key="3">
    <citation type="journal article" date="2004" name="Genome Res.">
        <title>The status, quality, and expansion of the NIH full-length cDNA project: the Mammalian Gene Collection (MGC).</title>
        <authorList>
            <consortium name="The MGC Project Team"/>
        </authorList>
    </citation>
    <scope>NUCLEOTIDE SEQUENCE [LARGE SCALE MRNA]</scope>
</reference>
<name>CL067_HUMAN</name>